<sequence length="71" mass="8500">MPVIKVRENEPFDVALRRFKRSCEKAGVLAEVRRREFYEKPTTERKRAKASAVKRHAKKLARENARRTRLY</sequence>
<dbReference type="EMBL" id="CP000826">
    <property type="protein sequence ID" value="ABV43392.1"/>
    <property type="molecule type" value="Genomic_DNA"/>
</dbReference>
<dbReference type="SMR" id="A8GJV2"/>
<dbReference type="STRING" id="399741.Spro_4298"/>
<dbReference type="KEGG" id="spe:Spro_4298"/>
<dbReference type="eggNOG" id="COG0828">
    <property type="taxonomic scope" value="Bacteria"/>
</dbReference>
<dbReference type="HOGENOM" id="CLU_159258_1_0_6"/>
<dbReference type="OrthoDB" id="9799244at2"/>
<dbReference type="GO" id="GO:1990904">
    <property type="term" value="C:ribonucleoprotein complex"/>
    <property type="evidence" value="ECO:0007669"/>
    <property type="project" value="UniProtKB-KW"/>
</dbReference>
<dbReference type="GO" id="GO:0005840">
    <property type="term" value="C:ribosome"/>
    <property type="evidence" value="ECO:0007669"/>
    <property type="project" value="UniProtKB-KW"/>
</dbReference>
<dbReference type="GO" id="GO:0003735">
    <property type="term" value="F:structural constituent of ribosome"/>
    <property type="evidence" value="ECO:0007669"/>
    <property type="project" value="InterPro"/>
</dbReference>
<dbReference type="GO" id="GO:0006412">
    <property type="term" value="P:translation"/>
    <property type="evidence" value="ECO:0007669"/>
    <property type="project" value="UniProtKB-UniRule"/>
</dbReference>
<dbReference type="FunFam" id="1.20.5.1150:FF:000001">
    <property type="entry name" value="30S ribosomal protein S21"/>
    <property type="match status" value="1"/>
</dbReference>
<dbReference type="Gene3D" id="1.20.5.1150">
    <property type="entry name" value="Ribosomal protein S8"/>
    <property type="match status" value="1"/>
</dbReference>
<dbReference type="HAMAP" id="MF_00358">
    <property type="entry name" value="Ribosomal_bS21"/>
    <property type="match status" value="1"/>
</dbReference>
<dbReference type="InterPro" id="IPR001911">
    <property type="entry name" value="Ribosomal_bS21"/>
</dbReference>
<dbReference type="InterPro" id="IPR018278">
    <property type="entry name" value="Ribosomal_bS21_CS"/>
</dbReference>
<dbReference type="InterPro" id="IPR038380">
    <property type="entry name" value="Ribosomal_bS21_sf"/>
</dbReference>
<dbReference type="NCBIfam" id="TIGR00030">
    <property type="entry name" value="S21p"/>
    <property type="match status" value="1"/>
</dbReference>
<dbReference type="PANTHER" id="PTHR21109">
    <property type="entry name" value="MITOCHONDRIAL 28S RIBOSOMAL PROTEIN S21"/>
    <property type="match status" value="1"/>
</dbReference>
<dbReference type="PANTHER" id="PTHR21109:SF22">
    <property type="entry name" value="SMALL RIBOSOMAL SUBUNIT PROTEIN BS21"/>
    <property type="match status" value="1"/>
</dbReference>
<dbReference type="Pfam" id="PF01165">
    <property type="entry name" value="Ribosomal_S21"/>
    <property type="match status" value="1"/>
</dbReference>
<dbReference type="PRINTS" id="PR00976">
    <property type="entry name" value="RIBOSOMALS21"/>
</dbReference>
<dbReference type="PROSITE" id="PS01181">
    <property type="entry name" value="RIBOSOMAL_S21"/>
    <property type="match status" value="1"/>
</dbReference>
<name>RS21_SERP5</name>
<proteinExistence type="inferred from homology"/>
<reference key="1">
    <citation type="submission" date="2007-09" db="EMBL/GenBank/DDBJ databases">
        <title>Complete sequence of chromosome of Serratia proteamaculans 568.</title>
        <authorList>
            <consortium name="US DOE Joint Genome Institute"/>
            <person name="Copeland A."/>
            <person name="Lucas S."/>
            <person name="Lapidus A."/>
            <person name="Barry K."/>
            <person name="Glavina del Rio T."/>
            <person name="Dalin E."/>
            <person name="Tice H."/>
            <person name="Pitluck S."/>
            <person name="Chain P."/>
            <person name="Malfatti S."/>
            <person name="Shin M."/>
            <person name="Vergez L."/>
            <person name="Schmutz J."/>
            <person name="Larimer F."/>
            <person name="Land M."/>
            <person name="Hauser L."/>
            <person name="Kyrpides N."/>
            <person name="Kim E."/>
            <person name="Taghavi S."/>
            <person name="Newman L."/>
            <person name="Vangronsveld J."/>
            <person name="van der Lelie D."/>
            <person name="Richardson P."/>
        </authorList>
    </citation>
    <scope>NUCLEOTIDE SEQUENCE [LARGE SCALE GENOMIC DNA]</scope>
    <source>
        <strain>568</strain>
    </source>
</reference>
<comment type="similarity">
    <text evidence="1">Belongs to the bacterial ribosomal protein bS21 family.</text>
</comment>
<evidence type="ECO:0000255" key="1">
    <source>
        <dbReference type="HAMAP-Rule" id="MF_00358"/>
    </source>
</evidence>
<evidence type="ECO:0000256" key="2">
    <source>
        <dbReference type="SAM" id="MobiDB-lite"/>
    </source>
</evidence>
<evidence type="ECO:0000305" key="3"/>
<gene>
    <name evidence="1" type="primary">rpsU</name>
    <name type="ordered locus">Spro_4298</name>
</gene>
<keyword id="KW-0687">Ribonucleoprotein</keyword>
<keyword id="KW-0689">Ribosomal protein</keyword>
<accession>A8GJV2</accession>
<protein>
    <recommendedName>
        <fullName evidence="1">Small ribosomal subunit protein bS21</fullName>
    </recommendedName>
    <alternativeName>
        <fullName evidence="3">30S ribosomal protein S21</fullName>
    </alternativeName>
</protein>
<feature type="chain" id="PRO_1000059850" description="Small ribosomal subunit protein bS21">
    <location>
        <begin position="1"/>
        <end position="71"/>
    </location>
</feature>
<feature type="region of interest" description="Disordered" evidence="2">
    <location>
        <begin position="43"/>
        <end position="71"/>
    </location>
</feature>
<feature type="compositionally biased region" description="Basic residues" evidence="2">
    <location>
        <begin position="46"/>
        <end position="59"/>
    </location>
</feature>
<feature type="compositionally biased region" description="Basic and acidic residues" evidence="2">
    <location>
        <begin position="60"/>
        <end position="71"/>
    </location>
</feature>
<organism>
    <name type="scientific">Serratia proteamaculans (strain 568)</name>
    <dbReference type="NCBI Taxonomy" id="399741"/>
    <lineage>
        <taxon>Bacteria</taxon>
        <taxon>Pseudomonadati</taxon>
        <taxon>Pseudomonadota</taxon>
        <taxon>Gammaproteobacteria</taxon>
        <taxon>Enterobacterales</taxon>
        <taxon>Yersiniaceae</taxon>
        <taxon>Serratia</taxon>
    </lineage>
</organism>